<organism>
    <name type="scientific">Bacillus pumilus (strain SAFR-032)</name>
    <dbReference type="NCBI Taxonomy" id="315750"/>
    <lineage>
        <taxon>Bacteria</taxon>
        <taxon>Bacillati</taxon>
        <taxon>Bacillota</taxon>
        <taxon>Bacilli</taxon>
        <taxon>Bacillales</taxon>
        <taxon>Bacillaceae</taxon>
        <taxon>Bacillus</taxon>
    </lineage>
</organism>
<name>BIOF_BACP2</name>
<reference key="1">
    <citation type="journal article" date="2007" name="PLoS ONE">
        <title>Paradoxical DNA repair and peroxide resistance gene conservation in Bacillus pumilus SAFR-032.</title>
        <authorList>
            <person name="Gioia J."/>
            <person name="Yerrapragada S."/>
            <person name="Qin X."/>
            <person name="Jiang H."/>
            <person name="Igboeli O.C."/>
            <person name="Muzny D."/>
            <person name="Dugan-Rocha S."/>
            <person name="Ding Y."/>
            <person name="Hawes A."/>
            <person name="Liu W."/>
            <person name="Perez L."/>
            <person name="Kovar C."/>
            <person name="Dinh H."/>
            <person name="Lee S."/>
            <person name="Nazareth L."/>
            <person name="Blyth P."/>
            <person name="Holder M."/>
            <person name="Buhay C."/>
            <person name="Tirumalai M.R."/>
            <person name="Liu Y."/>
            <person name="Dasgupta I."/>
            <person name="Bokhetache L."/>
            <person name="Fujita M."/>
            <person name="Karouia F."/>
            <person name="Eswara Moorthy P."/>
            <person name="Siefert J."/>
            <person name="Uzman A."/>
            <person name="Buzumbo P."/>
            <person name="Verma A."/>
            <person name="Zwiya H."/>
            <person name="McWilliams B.D."/>
            <person name="Olowu A."/>
            <person name="Clinkenbeard K.D."/>
            <person name="Newcombe D."/>
            <person name="Golebiewski L."/>
            <person name="Petrosino J.F."/>
            <person name="Nicholson W.L."/>
            <person name="Fox G.E."/>
            <person name="Venkateswaran K."/>
            <person name="Highlander S.K."/>
            <person name="Weinstock G.M."/>
        </authorList>
    </citation>
    <scope>NUCLEOTIDE SEQUENCE [LARGE SCALE GENOMIC DNA]</scope>
    <source>
        <strain>SAFR-032</strain>
    </source>
</reference>
<feature type="chain" id="PRO_0000380920" description="8-amino-7-oxononanoate synthase">
    <location>
        <begin position="1"/>
        <end position="392"/>
    </location>
</feature>
<feature type="binding site" evidence="1">
    <location>
        <begin position="108"/>
        <end position="109"/>
    </location>
    <ligand>
        <name>pyridoxal 5'-phosphate</name>
        <dbReference type="ChEBI" id="CHEBI:597326"/>
    </ligand>
</feature>
<feature type="binding site" evidence="1">
    <location>
        <position position="133"/>
    </location>
    <ligand>
        <name>substrate</name>
    </ligand>
</feature>
<feature type="binding site" evidence="1">
    <location>
        <position position="180"/>
    </location>
    <ligand>
        <name>pyridoxal 5'-phosphate</name>
        <dbReference type="ChEBI" id="CHEBI:597326"/>
    </ligand>
</feature>
<feature type="binding site" evidence="1">
    <location>
        <begin position="205"/>
        <end position="208"/>
    </location>
    <ligand>
        <name>pyridoxal 5'-phosphate</name>
        <dbReference type="ChEBI" id="CHEBI:597326"/>
    </ligand>
</feature>
<feature type="binding site" evidence="1">
    <location>
        <begin position="236"/>
        <end position="239"/>
    </location>
    <ligand>
        <name>pyridoxal 5'-phosphate</name>
        <dbReference type="ChEBI" id="CHEBI:597326"/>
    </ligand>
</feature>
<feature type="binding site" evidence="1">
    <location>
        <position position="353"/>
    </location>
    <ligand>
        <name>substrate</name>
    </ligand>
</feature>
<feature type="modified residue" description="N6-(pyridoxal phosphate)lysine" evidence="1">
    <location>
        <position position="239"/>
    </location>
</feature>
<gene>
    <name type="ordered locus">BPUM_1604</name>
</gene>
<accession>A8FDG9</accession>
<protein>
    <recommendedName>
        <fullName>8-amino-7-oxononanoate synthase</fullName>
        <shortName>AONS</shortName>
        <ecNumber>2.3.1.47</ecNumber>
    </recommendedName>
    <alternativeName>
        <fullName>7-keto-8-amino-pelargonic acid synthase</fullName>
        <shortName>7-KAP synthase</shortName>
        <shortName>KAPA synthase</shortName>
    </alternativeName>
    <alternativeName>
        <fullName>8-amino-7-ketopelargonate synthase</fullName>
    </alternativeName>
    <alternativeName>
        <fullName>Alpha-oxoamine synthase</fullName>
    </alternativeName>
</protein>
<comment type="function">
    <text evidence="1">Catalyzes the decarboxylative condensation of pimeloyl-[acyl-carrier protein] and L-alanine to produce 8-amino-7-oxononanoate (AON), [acyl-carrier protein], and carbon dioxide.</text>
</comment>
<comment type="catalytic activity">
    <reaction>
        <text>6-carboxyhexanoyl-[ACP] + L-alanine + H(+) = (8S)-8-amino-7-oxononanoate + holo-[ACP] + CO2</text>
        <dbReference type="Rhea" id="RHEA:42288"/>
        <dbReference type="Rhea" id="RHEA-COMP:9685"/>
        <dbReference type="Rhea" id="RHEA-COMP:9955"/>
        <dbReference type="ChEBI" id="CHEBI:15378"/>
        <dbReference type="ChEBI" id="CHEBI:16526"/>
        <dbReference type="ChEBI" id="CHEBI:57972"/>
        <dbReference type="ChEBI" id="CHEBI:64479"/>
        <dbReference type="ChEBI" id="CHEBI:78846"/>
        <dbReference type="ChEBI" id="CHEBI:149468"/>
        <dbReference type="EC" id="2.3.1.47"/>
    </reaction>
</comment>
<comment type="cofactor">
    <cofactor evidence="1">
        <name>pyridoxal 5'-phosphate</name>
        <dbReference type="ChEBI" id="CHEBI:597326"/>
    </cofactor>
</comment>
<comment type="pathway">
    <text>Cofactor biosynthesis; biotin biosynthesis.</text>
</comment>
<comment type="subunit">
    <text evidence="1">Homodimer.</text>
</comment>
<comment type="similarity">
    <text evidence="2">Belongs to the class-II pyridoxal-phosphate-dependent aminotransferase family. BioF subfamily.</text>
</comment>
<comment type="sequence caution" evidence="2">
    <conflict type="erroneous initiation">
        <sequence resource="EMBL-CDS" id="ABV62286"/>
    </conflict>
    <text>Extended N-terminus.</text>
</comment>
<sequence>MKEFTYLQDELETMKQQGTHQTLKEIDSKQSSTVTLNEQSVIQLSSNNYLGLTSHPRLMKAAKEAIDEFGAGTGSVRTIAGTMTMHERLEKKLAAFKKTEAALVFQSGFTTNQGVLSSILTKDDIVISDELNHASIIDGIRLTKADKKVYGHANMEELEKILKKSMNYRVRLIVTDGVFSMDGDIAPLSEIVRLAEAYDAFVMVDDAHASGVLGENGRGTVNHFKLDGRVHIQVGTLSKAVGVLGGYVAGSAVLIDYLKHKARPFLFSTSHPPAVTRACEEAIEVLLDEPERIETLWENAAYFKEKVIGLGFEVAPTETPIIPMMIGDEALTFRFSKALIERGVFAQGIAFPTVAKGKARIRAIITAEHTKEELDRALTIIEEEAKKLNILD</sequence>
<keyword id="KW-0012">Acyltransferase</keyword>
<keyword id="KW-0093">Biotin biosynthesis</keyword>
<keyword id="KW-0663">Pyridoxal phosphate</keyword>
<keyword id="KW-0808">Transferase</keyword>
<evidence type="ECO:0000250" key="1"/>
<evidence type="ECO:0000305" key="2"/>
<proteinExistence type="inferred from homology"/>
<dbReference type="EC" id="2.3.1.47"/>
<dbReference type="EMBL" id="CP000813">
    <property type="protein sequence ID" value="ABV62286.1"/>
    <property type="status" value="ALT_INIT"/>
    <property type="molecule type" value="Genomic_DNA"/>
</dbReference>
<dbReference type="RefSeq" id="WP_041815531.1">
    <property type="nucleotide sequence ID" value="NZ_VEIS01000003.1"/>
</dbReference>
<dbReference type="SMR" id="A8FDG9"/>
<dbReference type="STRING" id="315750.BPUM_1604"/>
<dbReference type="GeneID" id="5620867"/>
<dbReference type="KEGG" id="bpu:BPUM_1604"/>
<dbReference type="eggNOG" id="COG0156">
    <property type="taxonomic scope" value="Bacteria"/>
</dbReference>
<dbReference type="HOGENOM" id="CLU_015846_11_0_9"/>
<dbReference type="OrthoDB" id="9807157at2"/>
<dbReference type="UniPathway" id="UPA00078"/>
<dbReference type="Proteomes" id="UP000001355">
    <property type="component" value="Chromosome"/>
</dbReference>
<dbReference type="GO" id="GO:0008710">
    <property type="term" value="F:8-amino-7-oxononanoate synthase activity"/>
    <property type="evidence" value="ECO:0000250"/>
    <property type="project" value="UniProtKB"/>
</dbReference>
<dbReference type="GO" id="GO:0008890">
    <property type="term" value="F:glycine C-acetyltransferase activity"/>
    <property type="evidence" value="ECO:0000250"/>
    <property type="project" value="UniProtKB"/>
</dbReference>
<dbReference type="GO" id="GO:0030170">
    <property type="term" value="F:pyridoxal phosphate binding"/>
    <property type="evidence" value="ECO:0000250"/>
    <property type="project" value="UniProtKB"/>
</dbReference>
<dbReference type="GO" id="GO:0009102">
    <property type="term" value="P:biotin biosynthetic process"/>
    <property type="evidence" value="ECO:0000250"/>
    <property type="project" value="UniProtKB"/>
</dbReference>
<dbReference type="CDD" id="cd06454">
    <property type="entry name" value="KBL_like"/>
    <property type="match status" value="1"/>
</dbReference>
<dbReference type="FunFam" id="3.40.640.10:FF:000006">
    <property type="entry name" value="5-aminolevulinate synthase, mitochondrial"/>
    <property type="match status" value="1"/>
</dbReference>
<dbReference type="Gene3D" id="3.90.1150.10">
    <property type="entry name" value="Aspartate Aminotransferase, domain 1"/>
    <property type="match status" value="1"/>
</dbReference>
<dbReference type="Gene3D" id="3.40.640.10">
    <property type="entry name" value="Type I PLP-dependent aspartate aminotransferase-like (Major domain)"/>
    <property type="match status" value="1"/>
</dbReference>
<dbReference type="InterPro" id="IPR001917">
    <property type="entry name" value="Aminotrans_II_pyridoxalP_BS"/>
</dbReference>
<dbReference type="InterPro" id="IPR004839">
    <property type="entry name" value="Aminotransferase_I/II_large"/>
</dbReference>
<dbReference type="InterPro" id="IPR050087">
    <property type="entry name" value="AON_synthase_class-II"/>
</dbReference>
<dbReference type="InterPro" id="IPR010962">
    <property type="entry name" value="AONS_Archaea/Firmicutes"/>
</dbReference>
<dbReference type="InterPro" id="IPR004723">
    <property type="entry name" value="AONS_Archaea/Proteobacteria"/>
</dbReference>
<dbReference type="InterPro" id="IPR015424">
    <property type="entry name" value="PyrdxlP-dep_Trfase"/>
</dbReference>
<dbReference type="InterPro" id="IPR015421">
    <property type="entry name" value="PyrdxlP-dep_Trfase_major"/>
</dbReference>
<dbReference type="InterPro" id="IPR015422">
    <property type="entry name" value="PyrdxlP-dep_Trfase_small"/>
</dbReference>
<dbReference type="NCBIfam" id="TIGR00858">
    <property type="entry name" value="bioF"/>
    <property type="match status" value="1"/>
</dbReference>
<dbReference type="NCBIfam" id="TIGR01825">
    <property type="entry name" value="gly_Cac_T_rel"/>
    <property type="match status" value="1"/>
</dbReference>
<dbReference type="NCBIfam" id="NF005394">
    <property type="entry name" value="PRK06939.1"/>
    <property type="match status" value="1"/>
</dbReference>
<dbReference type="PANTHER" id="PTHR13693">
    <property type="entry name" value="CLASS II AMINOTRANSFERASE/8-AMINO-7-OXONONANOATE SYNTHASE"/>
    <property type="match status" value="1"/>
</dbReference>
<dbReference type="PANTHER" id="PTHR13693:SF3">
    <property type="entry name" value="LD36009P"/>
    <property type="match status" value="1"/>
</dbReference>
<dbReference type="Pfam" id="PF00155">
    <property type="entry name" value="Aminotran_1_2"/>
    <property type="match status" value="1"/>
</dbReference>
<dbReference type="SUPFAM" id="SSF53383">
    <property type="entry name" value="PLP-dependent transferases"/>
    <property type="match status" value="1"/>
</dbReference>
<dbReference type="PROSITE" id="PS00599">
    <property type="entry name" value="AA_TRANSFER_CLASS_2"/>
    <property type="match status" value="1"/>
</dbReference>